<comment type="function">
    <text>This gut peptide inhibits exocrine pancreatic secretion, has a vasoconstrictory action and inhibitis jejunal and colonic mobility.</text>
</comment>
<comment type="subcellular location">
    <subcellularLocation>
        <location>Secreted</location>
    </subcellularLocation>
</comment>
<comment type="PTM">
    <text evidence="2">The peptide YY form is cleaved at Pro-30 by the prolyl endopeptidase FAP (seprase) activity (in vitro) to generate peptide YY(3-36).</text>
</comment>
<comment type="similarity">
    <text evidence="7">Belongs to the NPY family.</text>
</comment>
<accession>P10631</accession>
<accession>Q3C1E8</accession>
<feature type="signal peptide" evidence="5">
    <location>
        <begin position="1"/>
        <end position="28"/>
    </location>
</feature>
<feature type="peptide" id="PRO_0000025391" description="Peptide YY">
    <location>
        <begin position="29"/>
        <end position="64"/>
    </location>
</feature>
<feature type="peptide" id="PRO_0000430666" description="Peptide YY(3-36)" evidence="2">
    <location>
        <begin position="31"/>
        <end position="64"/>
    </location>
</feature>
<feature type="propeptide" id="PRO_0000025392">
    <location>
        <begin position="68"/>
        <end position="98"/>
    </location>
</feature>
<feature type="site" description="Cleavage; by FAP" evidence="2">
    <location>
        <begin position="30"/>
        <end position="31"/>
    </location>
</feature>
<feature type="modified residue" description="Phosphoserine" evidence="3">
    <location>
        <position position="41"/>
    </location>
</feature>
<feature type="modified residue" description="Tyrosine amide" evidence="1">
    <location>
        <position position="64"/>
    </location>
</feature>
<proteinExistence type="evidence at protein level"/>
<organism>
    <name type="scientific">Rattus norvegicus</name>
    <name type="common">Rat</name>
    <dbReference type="NCBI Taxonomy" id="10116"/>
    <lineage>
        <taxon>Eukaryota</taxon>
        <taxon>Metazoa</taxon>
        <taxon>Chordata</taxon>
        <taxon>Craniata</taxon>
        <taxon>Vertebrata</taxon>
        <taxon>Euteleostomi</taxon>
        <taxon>Mammalia</taxon>
        <taxon>Eutheria</taxon>
        <taxon>Euarchontoglires</taxon>
        <taxon>Glires</taxon>
        <taxon>Rodentia</taxon>
        <taxon>Myomorpha</taxon>
        <taxon>Muroidea</taxon>
        <taxon>Muridae</taxon>
        <taxon>Murinae</taxon>
        <taxon>Rattus</taxon>
    </lineage>
</organism>
<protein>
    <recommendedName>
        <fullName evidence="6">Peptide YY</fullName>
        <shortName evidence="6">PYY</shortName>
    </recommendedName>
    <alternativeName>
        <fullName>Peptide tyrosine tyrosine</fullName>
    </alternativeName>
    <component>
        <recommendedName>
            <fullName evidence="4">Peptide YY(3-36)</fullName>
        </recommendedName>
        <alternativeName>
            <fullName evidence="4">PYY-II</fullName>
        </alternativeName>
    </component>
</protein>
<dbReference type="EMBL" id="M17523">
    <property type="protein sequence ID" value="AAA41222.1"/>
    <property type="molecule type" value="mRNA"/>
</dbReference>
<dbReference type="EMBL" id="S57220">
    <property type="protein sequence ID" value="AAB19752.1"/>
    <property type="molecule type" value="Genomic_DNA"/>
</dbReference>
<dbReference type="EMBL" id="AB238226">
    <property type="protein sequence ID" value="BAE46747.1"/>
    <property type="molecule type" value="mRNA"/>
</dbReference>
<dbReference type="PIR" id="A37955">
    <property type="entry name" value="A29364"/>
</dbReference>
<dbReference type="RefSeq" id="NP_001029252.1">
    <property type="nucleotide sequence ID" value="NM_001034080.1"/>
</dbReference>
<dbReference type="BMRB" id="P10631"/>
<dbReference type="SMR" id="P10631"/>
<dbReference type="FunCoup" id="P10631">
    <property type="interactions" value="9"/>
</dbReference>
<dbReference type="STRING" id="10116.ENSRNOP00000028323"/>
<dbReference type="PaxDb" id="10116-ENSRNOP00000028323"/>
<dbReference type="GeneID" id="287730"/>
<dbReference type="KEGG" id="rno:287730"/>
<dbReference type="UCSC" id="RGD:1593289">
    <property type="organism name" value="rat"/>
</dbReference>
<dbReference type="AGR" id="RGD:1593289"/>
<dbReference type="CTD" id="5697"/>
<dbReference type="RGD" id="1593289">
    <property type="gene designation" value="Pyy"/>
</dbReference>
<dbReference type="eggNOG" id="ENOG502S267">
    <property type="taxonomic scope" value="Eukaryota"/>
</dbReference>
<dbReference type="InParanoid" id="P10631"/>
<dbReference type="OrthoDB" id="9852947at2759"/>
<dbReference type="PhylomeDB" id="P10631"/>
<dbReference type="Reactome" id="R-RNO-375276">
    <property type="pathway name" value="Peptide ligand-binding receptors"/>
</dbReference>
<dbReference type="Reactome" id="R-RNO-418594">
    <property type="pathway name" value="G alpha (i) signalling events"/>
</dbReference>
<dbReference type="PRO" id="PR:P10631"/>
<dbReference type="Proteomes" id="UP000002494">
    <property type="component" value="Unplaced"/>
</dbReference>
<dbReference type="GO" id="GO:0005615">
    <property type="term" value="C:extracellular space"/>
    <property type="evidence" value="ECO:0000314"/>
    <property type="project" value="RGD"/>
</dbReference>
<dbReference type="GO" id="GO:0001664">
    <property type="term" value="F:G protein-coupled receptor binding"/>
    <property type="evidence" value="ECO:0000266"/>
    <property type="project" value="RGD"/>
</dbReference>
<dbReference type="GO" id="GO:0005184">
    <property type="term" value="F:neuropeptide hormone activity"/>
    <property type="evidence" value="ECO:0000266"/>
    <property type="project" value="RGD"/>
</dbReference>
<dbReference type="GO" id="GO:0031841">
    <property type="term" value="F:neuropeptide Y receptor binding"/>
    <property type="evidence" value="ECO:0000266"/>
    <property type="project" value="RGD"/>
</dbReference>
<dbReference type="GO" id="GO:0042755">
    <property type="term" value="P:eating behavior"/>
    <property type="evidence" value="ECO:0000266"/>
    <property type="project" value="RGD"/>
</dbReference>
<dbReference type="GO" id="GO:0007631">
    <property type="term" value="P:feeding behavior"/>
    <property type="evidence" value="ECO:0000318"/>
    <property type="project" value="GO_Central"/>
</dbReference>
<dbReference type="GO" id="GO:0032096">
    <property type="term" value="P:negative regulation of response to food"/>
    <property type="evidence" value="ECO:0000314"/>
    <property type="project" value="RGD"/>
</dbReference>
<dbReference type="GO" id="GO:0007218">
    <property type="term" value="P:neuropeptide signaling pathway"/>
    <property type="evidence" value="ECO:0000318"/>
    <property type="project" value="GO_Central"/>
</dbReference>
<dbReference type="CDD" id="cd00126">
    <property type="entry name" value="PAH"/>
    <property type="match status" value="1"/>
</dbReference>
<dbReference type="Gene3D" id="6.10.250.900">
    <property type="match status" value="1"/>
</dbReference>
<dbReference type="InterPro" id="IPR001955">
    <property type="entry name" value="Pancreatic_hormone-like"/>
</dbReference>
<dbReference type="InterPro" id="IPR020392">
    <property type="entry name" value="Pancreatic_hormone-like_CS"/>
</dbReference>
<dbReference type="PANTHER" id="PTHR10533">
    <property type="entry name" value="NEUROPEPTIDE Y/PANCREATIC HORMONE/PEPTIDE YY"/>
    <property type="match status" value="1"/>
</dbReference>
<dbReference type="PANTHER" id="PTHR10533:SF14">
    <property type="entry name" value="PEPTIDE YY-RELATED"/>
    <property type="match status" value="1"/>
</dbReference>
<dbReference type="Pfam" id="PF00159">
    <property type="entry name" value="Hormone_3"/>
    <property type="match status" value="1"/>
</dbReference>
<dbReference type="PRINTS" id="PR00278">
    <property type="entry name" value="PANCHORMONE"/>
</dbReference>
<dbReference type="SMART" id="SM00309">
    <property type="entry name" value="PAH"/>
    <property type="match status" value="1"/>
</dbReference>
<dbReference type="PROSITE" id="PS00265">
    <property type="entry name" value="PANCREATIC_HORMONE_1"/>
    <property type="match status" value="1"/>
</dbReference>
<dbReference type="PROSITE" id="PS50276">
    <property type="entry name" value="PANCREATIC_HORMONE_2"/>
    <property type="match status" value="1"/>
</dbReference>
<gene>
    <name type="primary">Pyy</name>
</gene>
<name>PYY_RAT</name>
<keyword id="KW-0027">Amidation</keyword>
<keyword id="KW-0165">Cleavage on pair of basic residues</keyword>
<keyword id="KW-0903">Direct protein sequencing</keyword>
<keyword id="KW-0372">Hormone</keyword>
<keyword id="KW-0597">Phosphoprotein</keyword>
<keyword id="KW-1185">Reference proteome</keyword>
<keyword id="KW-0964">Secreted</keyword>
<keyword id="KW-0732">Signal</keyword>
<evidence type="ECO:0000250" key="1"/>
<evidence type="ECO:0000250" key="2">
    <source>
        <dbReference type="UniProtKB" id="P10082"/>
    </source>
</evidence>
<evidence type="ECO:0000250" key="3">
    <source>
        <dbReference type="UniProtKB" id="P68005"/>
    </source>
</evidence>
<evidence type="ECO:0000250" key="4">
    <source>
        <dbReference type="UniProtKB" id="Q9TR93"/>
    </source>
</evidence>
<evidence type="ECO:0000269" key="5">
    <source>
    </source>
</evidence>
<evidence type="ECO:0000303" key="6">
    <source>
    </source>
</evidence>
<evidence type="ECO:0000305" key="7"/>
<reference key="1">
    <citation type="journal article" date="1987" name="J. Biol. Chem.">
        <title>Peptide YY. Structure of the precursor and expression in exocrine pancreas.</title>
        <authorList>
            <person name="Leiter A.B."/>
            <person name="Toder A."/>
            <person name="Wolfe H.J."/>
            <person name="Taylor I.L."/>
            <person name="Cooperman S."/>
            <person name="Mandel G."/>
            <person name="Goodman R.H."/>
        </authorList>
    </citation>
    <scope>NUCLEOTIDE SEQUENCE [MRNA]</scope>
</reference>
<reference key="2">
    <citation type="journal article" date="1991" name="Mol. Endocrinol.">
        <title>Isolation, characterization, and developmental expression of the rat peptide-YY gene.</title>
        <authorList>
            <person name="Krasinski S.D."/>
            <person name="Wheeler M.B."/>
            <person name="Leiter A.B."/>
        </authorList>
    </citation>
    <scope>NUCLEOTIDE SEQUENCE [GENOMIC DNA]</scope>
</reference>
<reference key="3">
    <citation type="submission" date="2005-10" db="EMBL/GenBank/DDBJ databases">
        <title>Pyy gene for peptide synthesis in Rattus norvegicus.</title>
        <authorList>
            <person name="Pandey J."/>
            <person name="Hamid Z."/>
            <person name="Vishwakarma N."/>
            <person name="Kumar A."/>
        </authorList>
    </citation>
    <scope>NUCLEOTIDE SEQUENCE [MRNA]</scope>
</reference>
<reference key="4">
    <citation type="journal article" date="1988" name="Regul. Pept.">
        <title>Isolation and sequence of rat peptide YY and neuropeptide Y.</title>
        <authorList>
            <person name="Corder R."/>
            <person name="Gaillard R.C."/>
            <person name="Boehlen P."/>
        </authorList>
    </citation>
    <scope>PROTEIN SEQUENCE OF 29-64</scope>
</reference>
<sequence length="98" mass="11121">MVAVRRPWPVMVAMLLVLLACLGALVDAYPAKPEAPGEDASPEELSRYYASLRHYLNLVTRQRYGKREVPAALFSKLLFTDDSENLPFRSRPEGVDQW</sequence>